<dbReference type="EC" id="2.4.2.18" evidence="1"/>
<dbReference type="EMBL" id="CR555306">
    <property type="protein sequence ID" value="CAI08502.1"/>
    <property type="molecule type" value="Genomic_DNA"/>
</dbReference>
<dbReference type="RefSeq" id="WP_011238189.1">
    <property type="nucleotide sequence ID" value="NC_006513.1"/>
</dbReference>
<dbReference type="SMR" id="Q5P2G2"/>
<dbReference type="STRING" id="76114.ebA4200"/>
<dbReference type="KEGG" id="eba:ebA4200"/>
<dbReference type="eggNOG" id="COG0547">
    <property type="taxonomic scope" value="Bacteria"/>
</dbReference>
<dbReference type="HOGENOM" id="CLU_034315_2_1_4"/>
<dbReference type="OrthoDB" id="9806430at2"/>
<dbReference type="UniPathway" id="UPA00035">
    <property type="reaction ID" value="UER00041"/>
</dbReference>
<dbReference type="Proteomes" id="UP000006552">
    <property type="component" value="Chromosome"/>
</dbReference>
<dbReference type="GO" id="GO:0005829">
    <property type="term" value="C:cytosol"/>
    <property type="evidence" value="ECO:0007669"/>
    <property type="project" value="TreeGrafter"/>
</dbReference>
<dbReference type="GO" id="GO:0004048">
    <property type="term" value="F:anthranilate phosphoribosyltransferase activity"/>
    <property type="evidence" value="ECO:0007669"/>
    <property type="project" value="UniProtKB-UniRule"/>
</dbReference>
<dbReference type="GO" id="GO:0000287">
    <property type="term" value="F:magnesium ion binding"/>
    <property type="evidence" value="ECO:0007669"/>
    <property type="project" value="UniProtKB-UniRule"/>
</dbReference>
<dbReference type="GO" id="GO:0000162">
    <property type="term" value="P:L-tryptophan biosynthetic process"/>
    <property type="evidence" value="ECO:0007669"/>
    <property type="project" value="UniProtKB-UniRule"/>
</dbReference>
<dbReference type="FunFam" id="1.20.970.10:FF:000006">
    <property type="entry name" value="Anthranilate phosphoribosyltransferase"/>
    <property type="match status" value="1"/>
</dbReference>
<dbReference type="FunFam" id="3.40.1030.10:FF:000002">
    <property type="entry name" value="Anthranilate phosphoribosyltransferase"/>
    <property type="match status" value="1"/>
</dbReference>
<dbReference type="Gene3D" id="3.40.1030.10">
    <property type="entry name" value="Nucleoside phosphorylase/phosphoribosyltransferase catalytic domain"/>
    <property type="match status" value="1"/>
</dbReference>
<dbReference type="Gene3D" id="1.20.970.10">
    <property type="entry name" value="Transferase, Pyrimidine Nucleoside Phosphorylase, Chain C"/>
    <property type="match status" value="1"/>
</dbReference>
<dbReference type="HAMAP" id="MF_00211">
    <property type="entry name" value="TrpD"/>
    <property type="match status" value="1"/>
</dbReference>
<dbReference type="InterPro" id="IPR005940">
    <property type="entry name" value="Anthranilate_Pribosyl_Tfrase"/>
</dbReference>
<dbReference type="InterPro" id="IPR000312">
    <property type="entry name" value="Glycosyl_Trfase_fam3"/>
</dbReference>
<dbReference type="InterPro" id="IPR017459">
    <property type="entry name" value="Glycosyl_Trfase_fam3_N_dom"/>
</dbReference>
<dbReference type="InterPro" id="IPR036320">
    <property type="entry name" value="Glycosyl_Trfase_fam3_N_dom_sf"/>
</dbReference>
<dbReference type="InterPro" id="IPR035902">
    <property type="entry name" value="Nuc_phospho_transferase"/>
</dbReference>
<dbReference type="NCBIfam" id="TIGR01245">
    <property type="entry name" value="trpD"/>
    <property type="match status" value="1"/>
</dbReference>
<dbReference type="PANTHER" id="PTHR43285">
    <property type="entry name" value="ANTHRANILATE PHOSPHORIBOSYLTRANSFERASE"/>
    <property type="match status" value="1"/>
</dbReference>
<dbReference type="PANTHER" id="PTHR43285:SF2">
    <property type="entry name" value="ANTHRANILATE PHOSPHORIBOSYLTRANSFERASE"/>
    <property type="match status" value="1"/>
</dbReference>
<dbReference type="Pfam" id="PF02885">
    <property type="entry name" value="Glycos_trans_3N"/>
    <property type="match status" value="1"/>
</dbReference>
<dbReference type="Pfam" id="PF00591">
    <property type="entry name" value="Glycos_transf_3"/>
    <property type="match status" value="1"/>
</dbReference>
<dbReference type="SUPFAM" id="SSF52418">
    <property type="entry name" value="Nucleoside phosphorylase/phosphoribosyltransferase catalytic domain"/>
    <property type="match status" value="1"/>
</dbReference>
<dbReference type="SUPFAM" id="SSF47648">
    <property type="entry name" value="Nucleoside phosphorylase/phosphoribosyltransferase N-terminal domain"/>
    <property type="match status" value="1"/>
</dbReference>
<keyword id="KW-0028">Amino-acid biosynthesis</keyword>
<keyword id="KW-0057">Aromatic amino acid biosynthesis</keyword>
<keyword id="KW-0328">Glycosyltransferase</keyword>
<keyword id="KW-0460">Magnesium</keyword>
<keyword id="KW-0479">Metal-binding</keyword>
<keyword id="KW-1185">Reference proteome</keyword>
<keyword id="KW-0808">Transferase</keyword>
<keyword id="KW-0822">Tryptophan biosynthesis</keyword>
<reference key="1">
    <citation type="journal article" date="2005" name="Arch. Microbiol.">
        <title>The genome sequence of an anaerobic aromatic-degrading denitrifying bacterium, strain EbN1.</title>
        <authorList>
            <person name="Rabus R."/>
            <person name="Kube M."/>
            <person name="Heider J."/>
            <person name="Beck A."/>
            <person name="Heitmann K."/>
            <person name="Widdel F."/>
            <person name="Reinhardt R."/>
        </authorList>
    </citation>
    <scope>NUCLEOTIDE SEQUENCE [LARGE SCALE GENOMIC DNA]</scope>
    <source>
        <strain>DSM 19018 / LMG 30748 / EbN1</strain>
    </source>
</reference>
<evidence type="ECO:0000255" key="1">
    <source>
        <dbReference type="HAMAP-Rule" id="MF_00211"/>
    </source>
</evidence>
<accession>Q5P2G2</accession>
<proteinExistence type="inferred from homology"/>
<protein>
    <recommendedName>
        <fullName evidence="1">Anthranilate phosphoribosyltransferase</fullName>
        <ecNumber evidence="1">2.4.2.18</ecNumber>
    </recommendedName>
</protein>
<name>TRPD_AROAE</name>
<gene>
    <name evidence="1" type="primary">trpD</name>
    <name type="ordered locus">AZOSEA23770</name>
    <name type="ORF">ebA4200</name>
</gene>
<organism>
    <name type="scientific">Aromatoleum aromaticum (strain DSM 19018 / LMG 30748 / EbN1)</name>
    <name type="common">Azoarcus sp. (strain EbN1)</name>
    <dbReference type="NCBI Taxonomy" id="76114"/>
    <lineage>
        <taxon>Bacteria</taxon>
        <taxon>Pseudomonadati</taxon>
        <taxon>Pseudomonadota</taxon>
        <taxon>Betaproteobacteria</taxon>
        <taxon>Rhodocyclales</taxon>
        <taxon>Rhodocyclaceae</taxon>
        <taxon>Aromatoleum</taxon>
    </lineage>
</organism>
<sequence length="343" mass="36385">MTITAQEALQRTIDHREIFYDEMLSLMRQIMAGEISPLMTAAIITGLRVKKETIGEITAAATVMRELATKVTVPGPDRNFLDVVGTGGDGANTFNISTTTIFVAAAAGARVAKHGGRSVSSKSGAADVLEALGVKLGLAPEQVAESIEATGIGFMYAPAHHSAMKNVAAVRREMGVRTIFNILGPLTNPASAPNTLMGVFHPDLVGIQARVMQRLGANHVLVVYGMDGMDEVSLGASTMVGELKDGEIREYQIHPEDFGLQMMGTRNLAVESAEQSKATLLGVLDNRPGPAREIVILNAGVALYTANLVDSIAVGIGRARELIESGAARAKLDEFIAFNRKFA</sequence>
<comment type="function">
    <text evidence="1">Catalyzes the transfer of the phosphoribosyl group of 5-phosphorylribose-1-pyrophosphate (PRPP) to anthranilate to yield N-(5'-phosphoribosyl)-anthranilate (PRA).</text>
</comment>
<comment type="catalytic activity">
    <reaction evidence="1">
        <text>N-(5-phospho-beta-D-ribosyl)anthranilate + diphosphate = 5-phospho-alpha-D-ribose 1-diphosphate + anthranilate</text>
        <dbReference type="Rhea" id="RHEA:11768"/>
        <dbReference type="ChEBI" id="CHEBI:16567"/>
        <dbReference type="ChEBI" id="CHEBI:18277"/>
        <dbReference type="ChEBI" id="CHEBI:33019"/>
        <dbReference type="ChEBI" id="CHEBI:58017"/>
        <dbReference type="EC" id="2.4.2.18"/>
    </reaction>
</comment>
<comment type="cofactor">
    <cofactor evidence="1">
        <name>Mg(2+)</name>
        <dbReference type="ChEBI" id="CHEBI:18420"/>
    </cofactor>
    <text evidence="1">Binds 2 magnesium ions per monomer.</text>
</comment>
<comment type="pathway">
    <text evidence="1">Amino-acid biosynthesis; L-tryptophan biosynthesis; L-tryptophan from chorismate: step 2/5.</text>
</comment>
<comment type="subunit">
    <text evidence="1">Homodimer.</text>
</comment>
<comment type="similarity">
    <text evidence="1">Belongs to the anthranilate phosphoribosyltransferase family.</text>
</comment>
<feature type="chain" id="PRO_0000227130" description="Anthranilate phosphoribosyltransferase">
    <location>
        <begin position="1"/>
        <end position="343"/>
    </location>
</feature>
<feature type="binding site" evidence="1">
    <location>
        <position position="85"/>
    </location>
    <ligand>
        <name>5-phospho-alpha-D-ribose 1-diphosphate</name>
        <dbReference type="ChEBI" id="CHEBI:58017"/>
    </ligand>
</feature>
<feature type="binding site" evidence="1">
    <location>
        <position position="85"/>
    </location>
    <ligand>
        <name>anthranilate</name>
        <dbReference type="ChEBI" id="CHEBI:16567"/>
        <label>1</label>
    </ligand>
</feature>
<feature type="binding site" evidence="1">
    <location>
        <begin position="88"/>
        <end position="89"/>
    </location>
    <ligand>
        <name>5-phospho-alpha-D-ribose 1-diphosphate</name>
        <dbReference type="ChEBI" id="CHEBI:58017"/>
    </ligand>
</feature>
<feature type="binding site" evidence="1">
    <location>
        <position position="93"/>
    </location>
    <ligand>
        <name>5-phospho-alpha-D-ribose 1-diphosphate</name>
        <dbReference type="ChEBI" id="CHEBI:58017"/>
    </ligand>
</feature>
<feature type="binding site" evidence="1">
    <location>
        <begin position="95"/>
        <end position="98"/>
    </location>
    <ligand>
        <name>5-phospho-alpha-D-ribose 1-diphosphate</name>
        <dbReference type="ChEBI" id="CHEBI:58017"/>
    </ligand>
</feature>
<feature type="binding site" evidence="1">
    <location>
        <position position="97"/>
    </location>
    <ligand>
        <name>Mg(2+)</name>
        <dbReference type="ChEBI" id="CHEBI:18420"/>
        <label>1</label>
    </ligand>
</feature>
<feature type="binding site" evidence="1">
    <location>
        <begin position="113"/>
        <end position="121"/>
    </location>
    <ligand>
        <name>5-phospho-alpha-D-ribose 1-diphosphate</name>
        <dbReference type="ChEBI" id="CHEBI:58017"/>
    </ligand>
</feature>
<feature type="binding site" evidence="1">
    <location>
        <position position="125"/>
    </location>
    <ligand>
        <name>5-phospho-alpha-D-ribose 1-diphosphate</name>
        <dbReference type="ChEBI" id="CHEBI:58017"/>
    </ligand>
</feature>
<feature type="binding site" evidence="1">
    <location>
        <position position="171"/>
    </location>
    <ligand>
        <name>anthranilate</name>
        <dbReference type="ChEBI" id="CHEBI:16567"/>
        <label>2</label>
    </ligand>
</feature>
<feature type="binding site" evidence="1">
    <location>
        <position position="230"/>
    </location>
    <ligand>
        <name>Mg(2+)</name>
        <dbReference type="ChEBI" id="CHEBI:18420"/>
        <label>2</label>
    </ligand>
</feature>
<feature type="binding site" evidence="1">
    <location>
        <position position="231"/>
    </location>
    <ligand>
        <name>Mg(2+)</name>
        <dbReference type="ChEBI" id="CHEBI:18420"/>
        <label>1</label>
    </ligand>
</feature>
<feature type="binding site" evidence="1">
    <location>
        <position position="231"/>
    </location>
    <ligand>
        <name>Mg(2+)</name>
        <dbReference type="ChEBI" id="CHEBI:18420"/>
        <label>2</label>
    </ligand>
</feature>